<accession>I1RGC4</accession>
<proteinExistence type="evidence at transcript level"/>
<keyword id="KW-0444">Lipid biosynthesis</keyword>
<keyword id="KW-0443">Lipid metabolism</keyword>
<keyword id="KW-0489">Methyltransferase</keyword>
<keyword id="KW-1185">Reference proteome</keyword>
<keyword id="KW-0949">S-adenosyl-L-methionine</keyword>
<keyword id="KW-0752">Steroid biosynthesis</keyword>
<keyword id="KW-0753">Steroid metabolism</keyword>
<keyword id="KW-0756">Sterol biosynthesis</keyword>
<keyword id="KW-1207">Sterol metabolism</keyword>
<keyword id="KW-0808">Transferase</keyword>
<evidence type="ECO:0000250" key="1">
    <source>
        <dbReference type="UniProtKB" id="Q4W9V1"/>
    </source>
</evidence>
<evidence type="ECO:0000269" key="2">
    <source>
    </source>
</evidence>
<evidence type="ECO:0000269" key="3">
    <source>
    </source>
</evidence>
<evidence type="ECO:0000269" key="4">
    <source>
    </source>
</evidence>
<evidence type="ECO:0000303" key="5">
    <source>
    </source>
</evidence>
<evidence type="ECO:0000305" key="6"/>
<evidence type="ECO:0000305" key="7">
    <source>
    </source>
</evidence>
<sequence length="381" mass="42479">MVASSNTGLEREDHQRDADFNKAMHGSSAQARGGVAAMFRKGGAAKQAAVDEYFKHWDNKPAENETPEERAARQAEYATLTRHYYNLATDLYEYGWGQSFHFCRFSQGEPFYQAIARHEHYLAHQIGIKDGMKVLDVGCGVGGPAREIAKFTGAHITGLNNNNYQIERATHYAFKEGLSNQLEFVKGDFMQMSFPDNSFDAVYAIEATVHAPTLKGIYSEIFRVLKPGGVFGVYEWLMTDEYDNDNLRHREIRLGIEQGDGISNMCKVSEGIAAIHDSGFEMLHHEDLADRPDALPWYWPLAGELRYVQTVGDFFTIVRMTTWGRTIAHGLAGLLETFKLAPAGTKKTADSLALAADCLVAGGRDKLFTPMYLMVARKPAA</sequence>
<protein>
    <recommendedName>
        <fullName evidence="5">Sterol 24-C-methyltransferase ERG6A</fullName>
        <shortName evidence="6">SCMT</shortName>
        <shortName evidence="6">SMT</shortName>
        <ecNumber evidence="1">2.1.1.-</ecNumber>
    </recommendedName>
    <alternativeName>
        <fullName evidence="6">Delta(24)-sterol C-methyltransferase ERG6A</fullName>
    </alternativeName>
    <alternativeName>
        <fullName evidence="5">Ergosterol biosynthesis protein 6A</fullName>
    </alternativeName>
</protein>
<name>ERG6A_GIBZE</name>
<gene>
    <name type="primary">FG02783.1</name>
    <name type="ORF">FGRAMPH1_01T11303</name>
</gene>
<dbReference type="EC" id="2.1.1.-" evidence="1"/>
<dbReference type="EMBL" id="HG970333">
    <property type="protein sequence ID" value="CEF77454.1"/>
    <property type="molecule type" value="Genomic_DNA"/>
</dbReference>
<dbReference type="RefSeq" id="XP_011323031.1">
    <property type="nucleotide sequence ID" value="XM_011324729.1"/>
</dbReference>
<dbReference type="SMR" id="I1RGC4"/>
<dbReference type="FunCoup" id="I1RGC4">
    <property type="interactions" value="310"/>
</dbReference>
<dbReference type="STRING" id="229533.I1RGC4"/>
<dbReference type="KEGG" id="fgr:FGSG_02783"/>
<dbReference type="VEuPathDB" id="FungiDB:FGRAMPH1_01G11303"/>
<dbReference type="eggNOG" id="KOG1269">
    <property type="taxonomic scope" value="Eukaryota"/>
</dbReference>
<dbReference type="HOGENOM" id="CLU_039068_5_3_1"/>
<dbReference type="InParanoid" id="I1RGC4"/>
<dbReference type="OrthoDB" id="33159at110618"/>
<dbReference type="UniPathway" id="UPA00768"/>
<dbReference type="Proteomes" id="UP000070720">
    <property type="component" value="Chromosome 2"/>
</dbReference>
<dbReference type="GO" id="GO:0005783">
    <property type="term" value="C:endoplasmic reticulum"/>
    <property type="evidence" value="ECO:0007669"/>
    <property type="project" value="TreeGrafter"/>
</dbReference>
<dbReference type="GO" id="GO:0003838">
    <property type="term" value="F:sterol 24-C-methyltransferase activity"/>
    <property type="evidence" value="ECO:0007669"/>
    <property type="project" value="UniProtKB-EC"/>
</dbReference>
<dbReference type="GO" id="GO:0006696">
    <property type="term" value="P:ergosterol biosynthetic process"/>
    <property type="evidence" value="ECO:0007669"/>
    <property type="project" value="TreeGrafter"/>
</dbReference>
<dbReference type="GO" id="GO:0032259">
    <property type="term" value="P:methylation"/>
    <property type="evidence" value="ECO:0007669"/>
    <property type="project" value="UniProtKB-KW"/>
</dbReference>
<dbReference type="CDD" id="cd02440">
    <property type="entry name" value="AdoMet_MTases"/>
    <property type="match status" value="1"/>
</dbReference>
<dbReference type="FunFam" id="3.40.50.150:FF:000121">
    <property type="entry name" value="Sterol 24-C-methyltransferase"/>
    <property type="match status" value="1"/>
</dbReference>
<dbReference type="Gene3D" id="3.40.50.150">
    <property type="entry name" value="Vaccinia Virus protein VP39"/>
    <property type="match status" value="1"/>
</dbReference>
<dbReference type="InterPro" id="IPR050447">
    <property type="entry name" value="Erg6_SMT_methyltransf"/>
</dbReference>
<dbReference type="InterPro" id="IPR013216">
    <property type="entry name" value="Methyltransf_11"/>
</dbReference>
<dbReference type="InterPro" id="IPR030384">
    <property type="entry name" value="MeTrfase_SMT"/>
</dbReference>
<dbReference type="InterPro" id="IPR029063">
    <property type="entry name" value="SAM-dependent_MTases_sf"/>
</dbReference>
<dbReference type="InterPro" id="IPR013705">
    <property type="entry name" value="Sterol_MeTrfase_C"/>
</dbReference>
<dbReference type="PANTHER" id="PTHR44068:SF1">
    <property type="entry name" value="HYPOTHETICAL LOC100005854"/>
    <property type="match status" value="1"/>
</dbReference>
<dbReference type="PANTHER" id="PTHR44068">
    <property type="entry name" value="ZGC:194242"/>
    <property type="match status" value="1"/>
</dbReference>
<dbReference type="Pfam" id="PF08241">
    <property type="entry name" value="Methyltransf_11"/>
    <property type="match status" value="1"/>
</dbReference>
<dbReference type="Pfam" id="PF08498">
    <property type="entry name" value="Sterol_MT_C"/>
    <property type="match status" value="1"/>
</dbReference>
<dbReference type="SUPFAM" id="SSF53335">
    <property type="entry name" value="S-adenosyl-L-methionine-dependent methyltransferases"/>
    <property type="match status" value="1"/>
</dbReference>
<dbReference type="PROSITE" id="PS51685">
    <property type="entry name" value="SAM_MT_ERG6_SMT"/>
    <property type="match status" value="1"/>
</dbReference>
<reference key="1">
    <citation type="journal article" date="2007" name="Science">
        <title>The Fusarium graminearum genome reveals a link between localized polymorphism and pathogen specialization.</title>
        <authorList>
            <person name="Cuomo C.A."/>
            <person name="Gueldener U."/>
            <person name="Xu J.-R."/>
            <person name="Trail F."/>
            <person name="Turgeon B.G."/>
            <person name="Di Pietro A."/>
            <person name="Walton J.D."/>
            <person name="Ma L.-J."/>
            <person name="Baker S.E."/>
            <person name="Rep M."/>
            <person name="Adam G."/>
            <person name="Antoniw J."/>
            <person name="Baldwin T."/>
            <person name="Calvo S.E."/>
            <person name="Chang Y.-L."/>
            <person name="DeCaprio D."/>
            <person name="Gale L.R."/>
            <person name="Gnerre S."/>
            <person name="Goswami R.S."/>
            <person name="Hammond-Kosack K."/>
            <person name="Harris L.J."/>
            <person name="Hilburn K."/>
            <person name="Kennell J.C."/>
            <person name="Kroken S."/>
            <person name="Magnuson J.K."/>
            <person name="Mannhaupt G."/>
            <person name="Mauceli E.W."/>
            <person name="Mewes H.-W."/>
            <person name="Mitterbauer R."/>
            <person name="Muehlbauer G."/>
            <person name="Muensterkoetter M."/>
            <person name="Nelson D."/>
            <person name="O'Donnell K."/>
            <person name="Ouellet T."/>
            <person name="Qi W."/>
            <person name="Quesneville H."/>
            <person name="Roncero M.I.G."/>
            <person name="Seong K.-Y."/>
            <person name="Tetko I.V."/>
            <person name="Urban M."/>
            <person name="Waalwijk C."/>
            <person name="Ward T.J."/>
            <person name="Yao J."/>
            <person name="Birren B.W."/>
            <person name="Kistler H.C."/>
        </authorList>
    </citation>
    <scope>NUCLEOTIDE SEQUENCE [LARGE SCALE GENOMIC DNA]</scope>
    <source>
        <strain>ATCC MYA-4620 / CBS 123657 / FGSC 9075 / NRRL 31084 / PH-1</strain>
    </source>
</reference>
<reference key="2">
    <citation type="journal article" date="2010" name="Nature">
        <title>Comparative genomics reveals mobile pathogenicity chromosomes in Fusarium.</title>
        <authorList>
            <person name="Ma L.-J."/>
            <person name="van der Does H.C."/>
            <person name="Borkovich K.A."/>
            <person name="Coleman J.J."/>
            <person name="Daboussi M.-J."/>
            <person name="Di Pietro A."/>
            <person name="Dufresne M."/>
            <person name="Freitag M."/>
            <person name="Grabherr M."/>
            <person name="Henrissat B."/>
            <person name="Houterman P.M."/>
            <person name="Kang S."/>
            <person name="Shim W.-B."/>
            <person name="Woloshuk C."/>
            <person name="Xie X."/>
            <person name="Xu J.-R."/>
            <person name="Antoniw J."/>
            <person name="Baker S.E."/>
            <person name="Bluhm B.H."/>
            <person name="Breakspear A."/>
            <person name="Brown D.W."/>
            <person name="Butchko R.A.E."/>
            <person name="Chapman S."/>
            <person name="Coulson R."/>
            <person name="Coutinho P.M."/>
            <person name="Danchin E.G.J."/>
            <person name="Diener A."/>
            <person name="Gale L.R."/>
            <person name="Gardiner D.M."/>
            <person name="Goff S."/>
            <person name="Hammond-Kosack K.E."/>
            <person name="Hilburn K."/>
            <person name="Hua-Van A."/>
            <person name="Jonkers W."/>
            <person name="Kazan K."/>
            <person name="Kodira C.D."/>
            <person name="Koehrsen M."/>
            <person name="Kumar L."/>
            <person name="Lee Y.-H."/>
            <person name="Li L."/>
            <person name="Manners J.M."/>
            <person name="Miranda-Saavedra D."/>
            <person name="Mukherjee M."/>
            <person name="Park G."/>
            <person name="Park J."/>
            <person name="Park S.-Y."/>
            <person name="Proctor R.H."/>
            <person name="Regev A."/>
            <person name="Ruiz-Roldan M.C."/>
            <person name="Sain D."/>
            <person name="Sakthikumar S."/>
            <person name="Sykes S."/>
            <person name="Schwartz D.C."/>
            <person name="Turgeon B.G."/>
            <person name="Wapinski I."/>
            <person name="Yoder O."/>
            <person name="Young S."/>
            <person name="Zeng Q."/>
            <person name="Zhou S."/>
            <person name="Galagan J."/>
            <person name="Cuomo C.A."/>
            <person name="Kistler H.C."/>
            <person name="Rep M."/>
        </authorList>
    </citation>
    <scope>GENOME REANNOTATION</scope>
    <source>
        <strain>ATCC MYA-4620 / CBS 123657 / FGSC 9075 / NRRL 31084 / PH-1</strain>
    </source>
</reference>
<reference key="3">
    <citation type="journal article" date="2015" name="BMC Genomics">
        <title>The completed genome sequence of the pathogenic ascomycete fungus Fusarium graminearum.</title>
        <authorList>
            <person name="King R."/>
            <person name="Urban M."/>
            <person name="Hammond-Kosack M.C.U."/>
            <person name="Hassani-Pak K."/>
            <person name="Hammond-Kosack K.E."/>
        </authorList>
    </citation>
    <scope>NUCLEOTIDE SEQUENCE [LARGE SCALE GENOMIC DNA]</scope>
    <source>
        <strain>ATCC MYA-4620 / CBS 123657 / FGSC 9075 / NRRL 31084 / PH-1</strain>
    </source>
</reference>
<reference key="4">
    <citation type="journal article" date="2013" name="Mol. Plant Pathol.">
        <title>Involvement of FgERG4 in ergosterol biosynthesis, vegetative differentiation and virulence in Fusarium graminearum.</title>
        <authorList>
            <person name="Liu X."/>
            <person name="Jiang J."/>
            <person name="Yin Y."/>
            <person name="Ma Z."/>
        </authorList>
    </citation>
    <scope>INDUCTION</scope>
</reference>
<reference key="5">
    <citation type="journal article" date="2013" name="New Phytol.">
        <title>Characterization of the sterol 14alpha-demethylases of Fusarium graminearum identifies a novel genus-specific CYP51 function.</title>
        <authorList>
            <person name="Fan J."/>
            <person name="Urban M."/>
            <person name="Parker J.E."/>
            <person name="Brewer H.C."/>
            <person name="Kelly S.L."/>
            <person name="Hammond-Kosack K.E."/>
            <person name="Fraaije B.A."/>
            <person name="Liu X."/>
            <person name="Cools H.J."/>
        </authorList>
    </citation>
    <scope>FUNCTION</scope>
    <scope>PATHWAY</scope>
</reference>
<reference key="6">
    <citation type="journal article" date="2019" name="Nat. Commun.">
        <title>A phosphorylated transcription factor regulates sterol biosynthesis in Fusarium graminearum.</title>
        <authorList>
            <person name="Liu Z."/>
            <person name="Jian Y."/>
            <person name="Chen Y."/>
            <person name="Kistler H.C."/>
            <person name="He P."/>
            <person name="Ma Z."/>
            <person name="Yin Y."/>
        </authorList>
    </citation>
    <scope>INDUCTION</scope>
</reference>
<feature type="chain" id="PRO_0000454367" description="Sterol 24-C-methyltransferase ERG6A">
    <location>
        <begin position="1"/>
        <end position="381"/>
    </location>
</feature>
<organism>
    <name type="scientific">Gibberella zeae (strain ATCC MYA-4620 / CBS 123657 / FGSC 9075 / NRRL 31084 / PH-1)</name>
    <name type="common">Wheat head blight fungus</name>
    <name type="synonym">Fusarium graminearum</name>
    <dbReference type="NCBI Taxonomy" id="229533"/>
    <lineage>
        <taxon>Eukaryota</taxon>
        <taxon>Fungi</taxon>
        <taxon>Dikarya</taxon>
        <taxon>Ascomycota</taxon>
        <taxon>Pezizomycotina</taxon>
        <taxon>Sordariomycetes</taxon>
        <taxon>Hypocreomycetidae</taxon>
        <taxon>Hypocreales</taxon>
        <taxon>Nectriaceae</taxon>
        <taxon>Fusarium</taxon>
    </lineage>
</organism>
<comment type="function">
    <text evidence="1 7">Sterol 24-C-methyltransferase; part of the third module of ergosterol biosynthesis pathway that includes the late steps of the pathway (By similarity). ERG6A and ERG6B methylate lanosterol at C-24 to produce eburicol (By similarity). The third module or late pathway involves the ergosterol synthesis itself through consecutive reactions that mainly occur in the endoplasmic reticulum (ER) membrane. Firstly, the squalene synthase ERG9 catalyzes the condensation of 2 farnesyl pyrophosphate moieties to form squalene, which is the precursor of all steroids. Squalene synthase is crucial for balancing the incorporation of farnesyl diphosphate (FPP) into sterol and nonsterol isoprene synthesis. Secondly, squalene is converted into lanosterol by the consecutive action of the squalene epoxidase ERG1 and the lanosterol synthase ERG7. Then, the delta(24)-sterol C-methyltransferase ERG6 methylates lanosterol at C-24 to produce eburicol. Eburicol is the substrate of the sterol 14-alpha demethylase encoded by CYP51A, CYP51B and CYP51C, to yield 4,4,24-trimethyl ergosta-8,14,24(28)-trienol. CYP51B encodes the enzyme primarily responsible for sterol 14-alpha-demethylation, and plays an essential role in ascospore formation. CYP51A encodes an additional sterol 14-alpha-demethylase, induced on ergosterol depletion and responsible for the intrinsic variation in azole sensitivity. The third CYP51 isoform, CYP51C, does not encode a sterol 14-alpha-demethylase, but is required for full virulence on host wheat ears. The C-14 reductase ERG24 then reduces the C14=C15 double bond which leads to 4,4-dimethylfecosterol. A sequence of further demethylations at C-4, involving the C-4 demethylation complex containing the C-4 methylsterol oxidases ERG25, the sterol-4-alpha-carboxylate 3-dehydrogenase ERG26 and the 3-keto-steroid reductase ERG27, leads to the production of fecosterol via 4-methylfecosterol. ERG28 has a role as a scaffold to help anchor ERG25, ERG26 and ERG27 to the endoplasmic reticulum. The C-8 sterol isomerase ERG2 then catalyzes the reaction which results in unsaturation at C-7 in the B ring of sterols and thus converts fecosterol to episterol. The sterol-C5-desaturases ERG3A and ERG3BB then catalyze the introduction of a C-5 double bond in the B ring to produce 5-dehydroepisterol. The C-22 sterol desaturases ERG5A and ERG5B further convert 5-dehydroepisterol into ergosta-5,7,22,24(28)-tetraen-3beta-ol by forming the C-22(23) double bond in the sterol side chain. Finally, ergosta-5,7,22,24(28)-tetraen-3beta-ol is substrate of the C-24(28) sterol reductase ERG4 to produce ergosterol (Probable).</text>
</comment>
<comment type="catalytic activity">
    <reaction evidence="1">
        <text>lanosterol + S-adenosyl-L-methionine = eburicol + S-adenosyl-L-homocysteine + H(+)</text>
        <dbReference type="Rhea" id="RHEA:52652"/>
        <dbReference type="ChEBI" id="CHEBI:15378"/>
        <dbReference type="ChEBI" id="CHEBI:16521"/>
        <dbReference type="ChEBI" id="CHEBI:57856"/>
        <dbReference type="ChEBI" id="CHEBI:59789"/>
        <dbReference type="ChEBI" id="CHEBI:70315"/>
    </reaction>
    <physiologicalReaction direction="left-to-right" evidence="1">
        <dbReference type="Rhea" id="RHEA:52653"/>
    </physiologicalReaction>
</comment>
<comment type="pathway">
    <text evidence="7">Steroid metabolism; ergosterol biosynthesis.</text>
</comment>
<comment type="induction">
    <text evidence="2 4">Expression is increased in the absence of the C-24(28) sterol reductase ERG4 (PubMed:22947191). Expression is positively regulated by the FgSR transcription factor that targets gene promoters containing 2 conserved CGAA repeat sequences (PubMed:30874562).</text>
</comment>
<comment type="miscellaneous">
    <text evidence="3">In Fusarium, the biosynthesis pathway of the sterol precursors leading to the prevalent sterol ergosterol differs from yeast. The ringsystem of lanosterol in S.cerevisiae is firstly demethylised in three enzymatic steps leading to the intermediate zymosterol and secondly a methyl group is added to zymosterol by the sterol 24-C-methyltransferase to form fecosterol. In Fusarium, lanosterol is firstly transmethylated by the sterol 24-C-methyltransferase leading to the intermediate eburicol and secondly demethylated in three steps to form fecosterol.</text>
</comment>
<comment type="similarity">
    <text evidence="6">Belongs to the class I-like SAM-binding methyltransferase superfamily. Erg6/SMT family.</text>
</comment>